<sequence>MKNINPTQTSAWQALQKHYDEMKDVTIAELFAKDSDRFAKFSATFDDLMLVDFSKNRITEETLAKLQDLAKETDLAGAIKSMFSGEKINRTEDRAVLHVALRNRSNTPIIVDDKDVMPEVNAVLEKMKTFSEAIISGQWKGYTGKAITDVVNIGIGGSDLGPFMVTEALRPYKNHLNMHFVSNVDGTHIAEVLKKVNPETTLFLVASKTFTTQETMTNAHSARDWFLKTAGDEKHVAKHFAALSTNAKAVGEFGIDTANMFEFWDWVGGRYSLWSAIGLSIILSVGFDNFVELLSGAHAMDKHFSTTPAEKNLPVLLALIGIWYNNFFGAETEAILPYDQYMHRFAAYFQQGNMESNGKYVDRNGNAVDYQTGPIIWGEPGTNGQHAFYQLIHQGTKMVPCDFIAPAITHNPLSDHHQKLLSNFFAQTEALAFGKSREVVEQEYRDQGKDPAQLEHVVPFKVFEGNRPTNSILLREITPYSLGALIALYEHKIFTQGAILNIFTFDQWGVELGKQLANRILPELGDDKAISSHDSSTNGLINRYKAWRA</sequence>
<dbReference type="EC" id="5.3.1.9" evidence="1"/>
<dbReference type="EMBL" id="CP000880">
    <property type="protein sequence ID" value="ABX23290.1"/>
    <property type="molecule type" value="Genomic_DNA"/>
</dbReference>
<dbReference type="SMR" id="A9MHA7"/>
<dbReference type="STRING" id="41514.SARI_03461"/>
<dbReference type="KEGG" id="ses:SARI_03461"/>
<dbReference type="HOGENOM" id="CLU_017947_3_1_6"/>
<dbReference type="UniPathway" id="UPA00109">
    <property type="reaction ID" value="UER00181"/>
</dbReference>
<dbReference type="UniPathway" id="UPA00138"/>
<dbReference type="Proteomes" id="UP000002084">
    <property type="component" value="Chromosome"/>
</dbReference>
<dbReference type="GO" id="GO:0005829">
    <property type="term" value="C:cytosol"/>
    <property type="evidence" value="ECO:0007669"/>
    <property type="project" value="TreeGrafter"/>
</dbReference>
<dbReference type="GO" id="GO:0097367">
    <property type="term" value="F:carbohydrate derivative binding"/>
    <property type="evidence" value="ECO:0007669"/>
    <property type="project" value="InterPro"/>
</dbReference>
<dbReference type="GO" id="GO:0004347">
    <property type="term" value="F:glucose-6-phosphate isomerase activity"/>
    <property type="evidence" value="ECO:0007669"/>
    <property type="project" value="UniProtKB-UniRule"/>
</dbReference>
<dbReference type="GO" id="GO:0048029">
    <property type="term" value="F:monosaccharide binding"/>
    <property type="evidence" value="ECO:0007669"/>
    <property type="project" value="TreeGrafter"/>
</dbReference>
<dbReference type="GO" id="GO:0006094">
    <property type="term" value="P:gluconeogenesis"/>
    <property type="evidence" value="ECO:0007669"/>
    <property type="project" value="UniProtKB-UniRule"/>
</dbReference>
<dbReference type="GO" id="GO:0051156">
    <property type="term" value="P:glucose 6-phosphate metabolic process"/>
    <property type="evidence" value="ECO:0007669"/>
    <property type="project" value="TreeGrafter"/>
</dbReference>
<dbReference type="GO" id="GO:0006096">
    <property type="term" value="P:glycolytic process"/>
    <property type="evidence" value="ECO:0007669"/>
    <property type="project" value="UniProtKB-UniRule"/>
</dbReference>
<dbReference type="CDD" id="cd05015">
    <property type="entry name" value="SIS_PGI_1"/>
    <property type="match status" value="1"/>
</dbReference>
<dbReference type="CDD" id="cd05016">
    <property type="entry name" value="SIS_PGI_2"/>
    <property type="match status" value="1"/>
</dbReference>
<dbReference type="FunFam" id="1.10.1390.10:FF:000001">
    <property type="entry name" value="Glucose-6-phosphate isomerase"/>
    <property type="match status" value="1"/>
</dbReference>
<dbReference type="FunFam" id="3.40.50.10490:FF:000004">
    <property type="entry name" value="Glucose-6-phosphate isomerase"/>
    <property type="match status" value="1"/>
</dbReference>
<dbReference type="Gene3D" id="1.10.1390.10">
    <property type="match status" value="1"/>
</dbReference>
<dbReference type="Gene3D" id="3.40.50.10490">
    <property type="entry name" value="Glucose-6-phosphate isomerase like protein, domain 1"/>
    <property type="match status" value="2"/>
</dbReference>
<dbReference type="HAMAP" id="MF_00473">
    <property type="entry name" value="G6P_isomerase"/>
    <property type="match status" value="1"/>
</dbReference>
<dbReference type="InterPro" id="IPR001672">
    <property type="entry name" value="G6P_Isomerase"/>
</dbReference>
<dbReference type="InterPro" id="IPR023096">
    <property type="entry name" value="G6P_Isomerase_C"/>
</dbReference>
<dbReference type="InterPro" id="IPR018189">
    <property type="entry name" value="Phosphoglucose_isomerase_CS"/>
</dbReference>
<dbReference type="InterPro" id="IPR046348">
    <property type="entry name" value="SIS_dom_sf"/>
</dbReference>
<dbReference type="InterPro" id="IPR035476">
    <property type="entry name" value="SIS_PGI_1"/>
</dbReference>
<dbReference type="InterPro" id="IPR035482">
    <property type="entry name" value="SIS_PGI_2"/>
</dbReference>
<dbReference type="NCBIfam" id="NF001211">
    <property type="entry name" value="PRK00179.1"/>
    <property type="match status" value="1"/>
</dbReference>
<dbReference type="PANTHER" id="PTHR11469">
    <property type="entry name" value="GLUCOSE-6-PHOSPHATE ISOMERASE"/>
    <property type="match status" value="1"/>
</dbReference>
<dbReference type="PANTHER" id="PTHR11469:SF1">
    <property type="entry name" value="GLUCOSE-6-PHOSPHATE ISOMERASE"/>
    <property type="match status" value="1"/>
</dbReference>
<dbReference type="Pfam" id="PF00342">
    <property type="entry name" value="PGI"/>
    <property type="match status" value="1"/>
</dbReference>
<dbReference type="PRINTS" id="PR00662">
    <property type="entry name" value="G6PISOMERASE"/>
</dbReference>
<dbReference type="SUPFAM" id="SSF53697">
    <property type="entry name" value="SIS domain"/>
    <property type="match status" value="1"/>
</dbReference>
<dbReference type="PROSITE" id="PS00765">
    <property type="entry name" value="P_GLUCOSE_ISOMERASE_1"/>
    <property type="match status" value="1"/>
</dbReference>
<dbReference type="PROSITE" id="PS00174">
    <property type="entry name" value="P_GLUCOSE_ISOMERASE_2"/>
    <property type="match status" value="1"/>
</dbReference>
<dbReference type="PROSITE" id="PS51463">
    <property type="entry name" value="P_GLUCOSE_ISOMERASE_3"/>
    <property type="match status" value="1"/>
</dbReference>
<accession>A9MHA7</accession>
<name>G6PI_SALAR</name>
<keyword id="KW-0963">Cytoplasm</keyword>
<keyword id="KW-0312">Gluconeogenesis</keyword>
<keyword id="KW-0324">Glycolysis</keyword>
<keyword id="KW-0413">Isomerase</keyword>
<keyword id="KW-1185">Reference proteome</keyword>
<gene>
    <name evidence="1" type="primary">pgi</name>
    <name type="ordered locus">SARI_03461</name>
</gene>
<evidence type="ECO:0000255" key="1">
    <source>
        <dbReference type="HAMAP-Rule" id="MF_00473"/>
    </source>
</evidence>
<reference key="1">
    <citation type="submission" date="2007-11" db="EMBL/GenBank/DDBJ databases">
        <authorList>
            <consortium name="The Salmonella enterica serovar Arizonae Genome Sequencing Project"/>
            <person name="McClelland M."/>
            <person name="Sanderson E.K."/>
            <person name="Porwollik S."/>
            <person name="Spieth J."/>
            <person name="Clifton W.S."/>
            <person name="Fulton R."/>
            <person name="Chunyan W."/>
            <person name="Wollam A."/>
            <person name="Shah N."/>
            <person name="Pepin K."/>
            <person name="Bhonagiri V."/>
            <person name="Nash W."/>
            <person name="Johnson M."/>
            <person name="Thiruvilangam P."/>
            <person name="Wilson R."/>
        </authorList>
    </citation>
    <scope>NUCLEOTIDE SEQUENCE [LARGE SCALE GENOMIC DNA]</scope>
    <source>
        <strain>ATCC BAA-731 / CDC346-86 / RSK2980</strain>
    </source>
</reference>
<protein>
    <recommendedName>
        <fullName evidence="1">Glucose-6-phosphate isomerase</fullName>
        <shortName evidence="1">GPI</shortName>
        <ecNumber evidence="1">5.3.1.9</ecNumber>
    </recommendedName>
    <alternativeName>
        <fullName evidence="1">Phosphoglucose isomerase</fullName>
        <shortName evidence="1">PGI</shortName>
    </alternativeName>
    <alternativeName>
        <fullName evidence="1">Phosphohexose isomerase</fullName>
        <shortName evidence="1">PHI</shortName>
    </alternativeName>
</protein>
<feature type="chain" id="PRO_1000081246" description="Glucose-6-phosphate isomerase">
    <location>
        <begin position="1"/>
        <end position="549"/>
    </location>
</feature>
<feature type="active site" description="Proton donor" evidence="1">
    <location>
        <position position="355"/>
    </location>
</feature>
<feature type="active site" evidence="1">
    <location>
        <position position="386"/>
    </location>
</feature>
<feature type="active site" evidence="1">
    <location>
        <position position="514"/>
    </location>
</feature>
<comment type="function">
    <text evidence="1">Catalyzes the reversible isomerization of glucose-6-phosphate to fructose-6-phosphate.</text>
</comment>
<comment type="catalytic activity">
    <reaction evidence="1">
        <text>alpha-D-glucose 6-phosphate = beta-D-fructose 6-phosphate</text>
        <dbReference type="Rhea" id="RHEA:11816"/>
        <dbReference type="ChEBI" id="CHEBI:57634"/>
        <dbReference type="ChEBI" id="CHEBI:58225"/>
        <dbReference type="EC" id="5.3.1.9"/>
    </reaction>
</comment>
<comment type="pathway">
    <text evidence="1">Carbohydrate biosynthesis; gluconeogenesis.</text>
</comment>
<comment type="pathway">
    <text evidence="1">Carbohydrate degradation; glycolysis; D-glyceraldehyde 3-phosphate and glycerone phosphate from D-glucose: step 2/4.</text>
</comment>
<comment type="subcellular location">
    <subcellularLocation>
        <location evidence="1">Cytoplasm</location>
    </subcellularLocation>
</comment>
<comment type="similarity">
    <text evidence="1">Belongs to the GPI family.</text>
</comment>
<proteinExistence type="inferred from homology"/>
<organism>
    <name type="scientific">Salmonella arizonae (strain ATCC BAA-731 / CDC346-86 / RSK2980)</name>
    <dbReference type="NCBI Taxonomy" id="41514"/>
    <lineage>
        <taxon>Bacteria</taxon>
        <taxon>Pseudomonadati</taxon>
        <taxon>Pseudomonadota</taxon>
        <taxon>Gammaproteobacteria</taxon>
        <taxon>Enterobacterales</taxon>
        <taxon>Enterobacteriaceae</taxon>
        <taxon>Salmonella</taxon>
    </lineage>
</organism>